<organism>
    <name type="scientific">Blochmanniella pennsylvanica (strain BPEN)</name>
    <dbReference type="NCBI Taxonomy" id="291272"/>
    <lineage>
        <taxon>Bacteria</taxon>
        <taxon>Pseudomonadati</taxon>
        <taxon>Pseudomonadota</taxon>
        <taxon>Gammaproteobacteria</taxon>
        <taxon>Enterobacterales</taxon>
        <taxon>Enterobacteriaceae</taxon>
        <taxon>ant endosymbionts</taxon>
        <taxon>Candidatus Blochmanniella</taxon>
    </lineage>
</organism>
<gene>
    <name evidence="1" type="primary">rpoB</name>
    <name type="ordered locus">BPEN_577</name>
</gene>
<reference key="1">
    <citation type="journal article" date="2005" name="Genome Res.">
        <title>Genome sequence of Blochmannia pennsylvanicus indicates parallel evolutionary trends among bacterial mutualists of insects.</title>
        <authorList>
            <person name="Degnan P.H."/>
            <person name="Lazarus A.B."/>
            <person name="Wernegreen J.J."/>
        </authorList>
    </citation>
    <scope>NUCLEOTIDE SEQUENCE [LARGE SCALE GENOMIC DNA]</scope>
    <source>
        <strain>BPEN</strain>
    </source>
</reference>
<evidence type="ECO:0000255" key="1">
    <source>
        <dbReference type="HAMAP-Rule" id="MF_01321"/>
    </source>
</evidence>
<feature type="chain" id="PRO_0000224033" description="DNA-directed RNA polymerase subunit beta">
    <location>
        <begin position="1"/>
        <end position="1341"/>
    </location>
</feature>
<proteinExistence type="inferred from homology"/>
<accession>Q492B9</accession>
<name>RPOB_BLOPB</name>
<comment type="function">
    <text evidence="1">DNA-dependent RNA polymerase catalyzes the transcription of DNA into RNA using the four ribonucleoside triphosphates as substrates.</text>
</comment>
<comment type="catalytic activity">
    <reaction evidence="1">
        <text>RNA(n) + a ribonucleoside 5'-triphosphate = RNA(n+1) + diphosphate</text>
        <dbReference type="Rhea" id="RHEA:21248"/>
        <dbReference type="Rhea" id="RHEA-COMP:14527"/>
        <dbReference type="Rhea" id="RHEA-COMP:17342"/>
        <dbReference type="ChEBI" id="CHEBI:33019"/>
        <dbReference type="ChEBI" id="CHEBI:61557"/>
        <dbReference type="ChEBI" id="CHEBI:140395"/>
        <dbReference type="EC" id="2.7.7.6"/>
    </reaction>
</comment>
<comment type="subunit">
    <text evidence="1">The RNAP catalytic core consists of 2 alpha, 1 beta, 1 beta' and 1 omega subunit. When a sigma factor is associated with the core the holoenzyme is formed, which can initiate transcription.</text>
</comment>
<comment type="similarity">
    <text evidence="1">Belongs to the RNA polymerase beta chain family.</text>
</comment>
<dbReference type="EC" id="2.7.7.6" evidence="1"/>
<dbReference type="EMBL" id="CP000016">
    <property type="protein sequence ID" value="AAZ41183.1"/>
    <property type="molecule type" value="Genomic_DNA"/>
</dbReference>
<dbReference type="RefSeq" id="WP_011283094.1">
    <property type="nucleotide sequence ID" value="NC_007292.1"/>
</dbReference>
<dbReference type="SMR" id="Q492B9"/>
<dbReference type="STRING" id="291272.BPEN_577"/>
<dbReference type="KEGG" id="bpn:BPEN_577"/>
<dbReference type="eggNOG" id="COG0085">
    <property type="taxonomic scope" value="Bacteria"/>
</dbReference>
<dbReference type="HOGENOM" id="CLU_000524_4_3_6"/>
<dbReference type="OrthoDB" id="9803954at2"/>
<dbReference type="Proteomes" id="UP000007794">
    <property type="component" value="Chromosome"/>
</dbReference>
<dbReference type="GO" id="GO:0000428">
    <property type="term" value="C:DNA-directed RNA polymerase complex"/>
    <property type="evidence" value="ECO:0007669"/>
    <property type="project" value="UniProtKB-KW"/>
</dbReference>
<dbReference type="GO" id="GO:0003677">
    <property type="term" value="F:DNA binding"/>
    <property type="evidence" value="ECO:0007669"/>
    <property type="project" value="UniProtKB-UniRule"/>
</dbReference>
<dbReference type="GO" id="GO:0003899">
    <property type="term" value="F:DNA-directed RNA polymerase activity"/>
    <property type="evidence" value="ECO:0007669"/>
    <property type="project" value="UniProtKB-UniRule"/>
</dbReference>
<dbReference type="GO" id="GO:0032549">
    <property type="term" value="F:ribonucleoside binding"/>
    <property type="evidence" value="ECO:0007669"/>
    <property type="project" value="InterPro"/>
</dbReference>
<dbReference type="GO" id="GO:0006351">
    <property type="term" value="P:DNA-templated transcription"/>
    <property type="evidence" value="ECO:0007669"/>
    <property type="project" value="UniProtKB-UniRule"/>
</dbReference>
<dbReference type="CDD" id="cd00653">
    <property type="entry name" value="RNA_pol_B_RPB2"/>
    <property type="match status" value="1"/>
</dbReference>
<dbReference type="FunFam" id="2.30.150.10:FF:000001">
    <property type="entry name" value="DNA-directed RNA polymerase subunit beta"/>
    <property type="match status" value="1"/>
</dbReference>
<dbReference type="FunFam" id="2.40.270.10:FF:000003">
    <property type="entry name" value="DNA-directed RNA polymerase subunit beta"/>
    <property type="match status" value="1"/>
</dbReference>
<dbReference type="FunFam" id="2.40.270.10:FF:000004">
    <property type="entry name" value="DNA-directed RNA polymerase subunit beta"/>
    <property type="match status" value="1"/>
</dbReference>
<dbReference type="FunFam" id="2.40.50.100:FF:000006">
    <property type="entry name" value="DNA-directed RNA polymerase subunit beta"/>
    <property type="match status" value="1"/>
</dbReference>
<dbReference type="FunFam" id="2.40.50.150:FF:000001">
    <property type="entry name" value="DNA-directed RNA polymerase subunit beta"/>
    <property type="match status" value="1"/>
</dbReference>
<dbReference type="FunFam" id="3.90.1100.10:FF:000002">
    <property type="entry name" value="DNA-directed RNA polymerase subunit beta"/>
    <property type="match status" value="1"/>
</dbReference>
<dbReference type="FunFam" id="3.90.1110.10:FF:000001">
    <property type="entry name" value="DNA-directed RNA polymerase subunit beta"/>
    <property type="match status" value="1"/>
</dbReference>
<dbReference type="FunFam" id="3.90.1110.10:FF:000004">
    <property type="entry name" value="DNA-directed RNA polymerase subunit beta"/>
    <property type="match status" value="1"/>
</dbReference>
<dbReference type="FunFam" id="3.90.1800.10:FF:000001">
    <property type="entry name" value="DNA-directed RNA polymerase subunit beta"/>
    <property type="match status" value="1"/>
</dbReference>
<dbReference type="Gene3D" id="2.40.50.100">
    <property type="match status" value="1"/>
</dbReference>
<dbReference type="Gene3D" id="2.40.50.150">
    <property type="match status" value="1"/>
</dbReference>
<dbReference type="Gene3D" id="3.90.1100.10">
    <property type="match status" value="2"/>
</dbReference>
<dbReference type="Gene3D" id="2.30.150.10">
    <property type="entry name" value="DNA-directed RNA polymerase, beta subunit, external 1 domain"/>
    <property type="match status" value="1"/>
</dbReference>
<dbReference type="Gene3D" id="2.40.270.10">
    <property type="entry name" value="DNA-directed RNA polymerase, subunit 2, domain 6"/>
    <property type="match status" value="1"/>
</dbReference>
<dbReference type="Gene3D" id="3.90.1800.10">
    <property type="entry name" value="RNA polymerase alpha subunit dimerisation domain"/>
    <property type="match status" value="1"/>
</dbReference>
<dbReference type="Gene3D" id="3.90.1110.10">
    <property type="entry name" value="RNA polymerase Rpb2, domain 2"/>
    <property type="match status" value="1"/>
</dbReference>
<dbReference type="HAMAP" id="MF_01321">
    <property type="entry name" value="RNApol_bact_RpoB"/>
    <property type="match status" value="1"/>
</dbReference>
<dbReference type="InterPro" id="IPR042107">
    <property type="entry name" value="DNA-dir_RNA_pol_bsu_ext_1_sf"/>
</dbReference>
<dbReference type="InterPro" id="IPR019462">
    <property type="entry name" value="DNA-dir_RNA_pol_bsu_external_1"/>
</dbReference>
<dbReference type="InterPro" id="IPR015712">
    <property type="entry name" value="DNA-dir_RNA_pol_su2"/>
</dbReference>
<dbReference type="InterPro" id="IPR007120">
    <property type="entry name" value="DNA-dir_RNAP_su2_dom"/>
</dbReference>
<dbReference type="InterPro" id="IPR037033">
    <property type="entry name" value="DNA-dir_RNAP_su2_hyb_sf"/>
</dbReference>
<dbReference type="InterPro" id="IPR010243">
    <property type="entry name" value="RNA_pol_bsu_bac"/>
</dbReference>
<dbReference type="InterPro" id="IPR007121">
    <property type="entry name" value="RNA_pol_bsu_CS"/>
</dbReference>
<dbReference type="InterPro" id="IPR007644">
    <property type="entry name" value="RNA_pol_bsu_protrusion"/>
</dbReference>
<dbReference type="InterPro" id="IPR007642">
    <property type="entry name" value="RNA_pol_Rpb2_2"/>
</dbReference>
<dbReference type="InterPro" id="IPR037034">
    <property type="entry name" value="RNA_pol_Rpb2_2_sf"/>
</dbReference>
<dbReference type="InterPro" id="IPR007645">
    <property type="entry name" value="RNA_pol_Rpb2_3"/>
</dbReference>
<dbReference type="InterPro" id="IPR007641">
    <property type="entry name" value="RNA_pol_Rpb2_7"/>
</dbReference>
<dbReference type="InterPro" id="IPR014724">
    <property type="entry name" value="RNA_pol_RPB2_OB-fold"/>
</dbReference>
<dbReference type="NCBIfam" id="NF001616">
    <property type="entry name" value="PRK00405.1"/>
    <property type="match status" value="1"/>
</dbReference>
<dbReference type="NCBIfam" id="TIGR02013">
    <property type="entry name" value="rpoB"/>
    <property type="match status" value="1"/>
</dbReference>
<dbReference type="PANTHER" id="PTHR20856">
    <property type="entry name" value="DNA-DIRECTED RNA POLYMERASE I SUBUNIT 2"/>
    <property type="match status" value="1"/>
</dbReference>
<dbReference type="Pfam" id="PF04563">
    <property type="entry name" value="RNA_pol_Rpb2_1"/>
    <property type="match status" value="1"/>
</dbReference>
<dbReference type="Pfam" id="PF04561">
    <property type="entry name" value="RNA_pol_Rpb2_2"/>
    <property type="match status" value="2"/>
</dbReference>
<dbReference type="Pfam" id="PF04565">
    <property type="entry name" value="RNA_pol_Rpb2_3"/>
    <property type="match status" value="1"/>
</dbReference>
<dbReference type="Pfam" id="PF10385">
    <property type="entry name" value="RNA_pol_Rpb2_45"/>
    <property type="match status" value="1"/>
</dbReference>
<dbReference type="Pfam" id="PF00562">
    <property type="entry name" value="RNA_pol_Rpb2_6"/>
    <property type="match status" value="1"/>
</dbReference>
<dbReference type="Pfam" id="PF04560">
    <property type="entry name" value="RNA_pol_Rpb2_7"/>
    <property type="match status" value="1"/>
</dbReference>
<dbReference type="SUPFAM" id="SSF64484">
    <property type="entry name" value="beta and beta-prime subunits of DNA dependent RNA-polymerase"/>
    <property type="match status" value="1"/>
</dbReference>
<dbReference type="PROSITE" id="PS01166">
    <property type="entry name" value="RNA_POL_BETA"/>
    <property type="match status" value="1"/>
</dbReference>
<sequence length="1341" mass="151222">MVYSYTEKKRIRKDFGKRPQVLDIPYLLSIQIDSFQKFIKQDPEEPCGLEAAFRSVFPIKSYNGNAELQYIKYQLGEPTFDVKECQTRGATFSAPLRVRLCLIIYEREGLNNIIKNTKEQEVYMGEIPLMTNNGTFIINGIERVIVSQLHRSPGVFFDSDKGKTHSSGKVLYNARIIPYRGSWLDFEFDLKDNLFVRIDRRRKLPVTVILRALNYTTDQILNIFFNKVIYEIQNNTLYMHLIPERLRGETASFDIAVNGVIYVKKGRRIAAKHIRQLKKDKISKIEVPMDYIIGKVVIKDYFDKNTNIPIVTANTEISSDILHNLIRSGYESIETLFSNDLDYGNYISETLRIDATTNKFDALVEIYRVMRPGEPPTKEAAEYLFENLFFSEERYDLSSVGRMKFNRSLQRVQIEDLGTLKKDDIVDVIKKLIDIRNGKGEVDDIDHLGNRRIRSVGEMAENQFRIGLVRVERAVKERLSLGDLDVLTPQDLINAKPISAAVREFFTSSQLSQFMDQNNPLSEITHKRRISALGPGGLTRERAGFEVRDVHPTHYGRVCPIETPEGPNIGLINSLSVYARANKYGFLETPYRKVQNGVVSNDIHYLSAIEEGDFVIAQANTNLNSIGEFIDDLVTCRNKGESGLFKKDQVDYMDVSTQQIVSVAASLIPFLEHDDANRALMGANMQRQAVPVLCSEKPLVGTGMERAVAIDSGVTVVAKRGGVIKYVDASRIVIHVNKNETHTEESGIDIYQLTKYIRSNQNTCINQRPCVSLGELVEHGDVIADGPSTDLGELALGQNMRIAFMPWNGYNFEDSMLVSERVVQEDKFTSIHIQELTCVSRDTKLGPEEITADIPNVGETALSKLDESGIIYIGAEVIGGDILVGKVTPKGETQLTPEEKLLRAIFGEKASDVKDSSLRVPNGVCGTVIDVQIFTRDGINKDKRSLIIESEKLKQVKKDLSEELQIFESALFDRVCDVLMTSGIDKKKLFETSRNAWLDLVLSDPEKQYQLSQLTKQYFDLKRMFEKKLEIQHRKITQGDELAPGILKIVKVYLAVKRQIQPGDKMAGRHGNKGVISKINPIEDMPYDQHGIPVDIVLNPLGVPSRMNIGQILETHLGMAAKGIGDKINFMLQQHKEANQLRRFMQQAYNLGEGSRQHINLNSFSDIEILKLAKNLKKGMPIATPVFDGATEKEIKDLLKLSGLPSSGQITLFDGCTGEAFERQVTVGYMYMLKLNHLVDDKMHARSTGSYSLVTQQPLGGKAQFGGQRFGEMEVWALEAYGASYTLQEMLTVKSDDVNGRTKMYKNIVDGNHMMEPGMPESFNVLLKEIRSLAINIELED</sequence>
<protein>
    <recommendedName>
        <fullName evidence="1">DNA-directed RNA polymerase subunit beta</fullName>
        <shortName evidence="1">RNAP subunit beta</shortName>
        <ecNumber evidence="1">2.7.7.6</ecNumber>
    </recommendedName>
    <alternativeName>
        <fullName evidence="1">RNA polymerase subunit beta</fullName>
    </alternativeName>
    <alternativeName>
        <fullName evidence="1">Transcriptase subunit beta</fullName>
    </alternativeName>
</protein>
<keyword id="KW-0240">DNA-directed RNA polymerase</keyword>
<keyword id="KW-0548">Nucleotidyltransferase</keyword>
<keyword id="KW-1185">Reference proteome</keyword>
<keyword id="KW-0804">Transcription</keyword>
<keyword id="KW-0808">Transferase</keyword>